<name>SUT4_ORYSJ</name>
<sequence length="595" mass="63484">MDSAAGGGGLTAIRLPYRHLRDAEMELVSLNGGTPRGGSPKDPDATHQQGPPAARTTTTRKLVLACMVAAGVQFGWALQLSLLTPYIQTLGIDHAMASFIWLCGPITGFVVQPCVGVWSDKCRSKYGRRRPFILAGCLMICFAVTLIGFSADLGYILGDTTEHCSTYKGSRFRAAIIFVLGFWMLDLANNTVQGPARALLADLSGPDQCNSANAIFCTWMAVGNVLGFSSGASGNWHKWFPFLMTRACCEACSNLKAAFLVAVVFLLFCMSVTLYFAEEIPLEPTDAQRLSDSAPLLNGSRDDNNASNEPRNGALPNGHTDGSNVPANSNAEDSNSNRENVEVFNDGPGAVLVNILTSMRHLPPGMYSVLLVMALTWLSWFPFFLFDTDWMGREVYHGDPNGNLSERKAYDNGVREGAFGLLLNSVVLGIGSFLVDPLCRLMGARLVWAISNFTVFICMLATAILSWISFDLYSSKLHHIIGANKTVKNSALIVFSLLGLPLSITYSVPFSVTAELTAGTGGGQGLATGVLNLAIVVPQIVVSLGAGPWDALFGGGNVPAFALASVFSLGAGVLAVLKLPKLPNSYRSAGFHGFG</sequence>
<organism>
    <name type="scientific">Oryza sativa subsp. japonica</name>
    <name type="common">Rice</name>
    <dbReference type="NCBI Taxonomy" id="39947"/>
    <lineage>
        <taxon>Eukaryota</taxon>
        <taxon>Viridiplantae</taxon>
        <taxon>Streptophyta</taxon>
        <taxon>Embryophyta</taxon>
        <taxon>Tracheophyta</taxon>
        <taxon>Spermatophyta</taxon>
        <taxon>Magnoliopsida</taxon>
        <taxon>Liliopsida</taxon>
        <taxon>Poales</taxon>
        <taxon>Poaceae</taxon>
        <taxon>BOP clade</taxon>
        <taxon>Oryzoideae</taxon>
        <taxon>Oryzeae</taxon>
        <taxon>Oryzinae</taxon>
        <taxon>Oryza</taxon>
        <taxon>Oryza sativa</taxon>
    </lineage>
</organism>
<comment type="function">
    <text evidence="1">Responsible for the transport of sucrose into the cell, with the concomitant uptake of protons (symport system). May also transport other glucosides (By similarity).</text>
</comment>
<comment type="pathway">
    <text>Glycan biosynthesis; sucrose metabolism.</text>
</comment>
<comment type="subunit">
    <text evidence="1">Homodimer.</text>
</comment>
<comment type="subcellular location">
    <subcellularLocation>
        <location evidence="5">Cell membrane</location>
        <topology evidence="5">Multi-pass membrane protein</topology>
    </subcellularLocation>
</comment>
<comment type="tissue specificity">
    <text evidence="4">Widely expressed. Highest expression in sink leaves and lowest in germinating seeds.</text>
</comment>
<comment type="developmental stage">
    <text evidence="4">Expressed in developing caryopses from 1 to 7 days after flowering (DAF) and then declines to nearly undetectable levels by 15 DAF.</text>
</comment>
<comment type="similarity">
    <text evidence="5">Belongs to the glycoside-pentoside-hexuronide (GPH) cation symporter transporter (TC 2.A.2.4) family.</text>
</comment>
<reference key="1">
    <citation type="journal article" date="2003" name="Plant Cell Physiol.">
        <title>The sucrose transporter gene family in rice.</title>
        <authorList>
            <person name="Aoki N."/>
            <person name="Hirose T."/>
            <person name="Scofield G.N."/>
            <person name="Whitfeld P.R."/>
            <person name="Furbank R.T."/>
        </authorList>
    </citation>
    <scope>NUCLEOTIDE SEQUENCE [MRNA]</scope>
    <scope>TISSUE SPECIFICITY</scope>
    <scope>DEVELOPMENTAL STAGE</scope>
    <source>
        <strain>cv. Nipponbare</strain>
        <tissue>Panicle</tissue>
    </source>
</reference>
<reference key="2">
    <citation type="submission" date="2002-07" db="EMBL/GenBank/DDBJ databases">
        <title>Cloning and functional clarification of a sucrose transporter gene in the developing endosperm and embryo for rice (Oryza sativa).</title>
        <authorList>
            <person name="Wang Y.D."/>
            <person name="Wang X.S."/>
        </authorList>
    </citation>
    <scope>NUCLEOTIDE SEQUENCE [MRNA]</scope>
    <source>
        <strain>cv. Zhonghua 15</strain>
        <tissue>Endosperm</tissue>
    </source>
</reference>
<reference key="3">
    <citation type="journal article" date="2005" name="Nature">
        <title>The map-based sequence of the rice genome.</title>
        <authorList>
            <consortium name="International rice genome sequencing project (IRGSP)"/>
        </authorList>
    </citation>
    <scope>NUCLEOTIDE SEQUENCE [LARGE SCALE GENOMIC DNA]</scope>
    <source>
        <strain>cv. Nipponbare</strain>
    </source>
</reference>
<reference key="4">
    <citation type="journal article" date="2008" name="Nucleic Acids Res.">
        <title>The rice annotation project database (RAP-DB): 2008 update.</title>
        <authorList>
            <consortium name="The rice annotation project (RAP)"/>
        </authorList>
    </citation>
    <scope>GENOME REANNOTATION</scope>
    <source>
        <strain>cv. Nipponbare</strain>
    </source>
</reference>
<reference key="5">
    <citation type="journal article" date="2013" name="Rice">
        <title>Improvement of the Oryza sativa Nipponbare reference genome using next generation sequence and optical map data.</title>
        <authorList>
            <person name="Kawahara Y."/>
            <person name="de la Bastide M."/>
            <person name="Hamilton J.P."/>
            <person name="Kanamori H."/>
            <person name="McCombie W.R."/>
            <person name="Ouyang S."/>
            <person name="Schwartz D.C."/>
            <person name="Tanaka T."/>
            <person name="Wu J."/>
            <person name="Zhou S."/>
            <person name="Childs K.L."/>
            <person name="Davidson R.M."/>
            <person name="Lin H."/>
            <person name="Quesada-Ocampo L."/>
            <person name="Vaillancourt B."/>
            <person name="Sakai H."/>
            <person name="Lee S.S."/>
            <person name="Kim J."/>
            <person name="Numa H."/>
            <person name="Itoh T."/>
            <person name="Buell C.R."/>
            <person name="Matsumoto T."/>
        </authorList>
    </citation>
    <scope>GENOME REANNOTATION</scope>
    <source>
        <strain>cv. Nipponbare</strain>
    </source>
</reference>
<reference key="6">
    <citation type="journal article" date="2005" name="PLoS Biol.">
        <title>The genomes of Oryza sativa: a history of duplications.</title>
        <authorList>
            <person name="Yu J."/>
            <person name="Wang J."/>
            <person name="Lin W."/>
            <person name="Li S."/>
            <person name="Li H."/>
            <person name="Zhou J."/>
            <person name="Ni P."/>
            <person name="Dong W."/>
            <person name="Hu S."/>
            <person name="Zeng C."/>
            <person name="Zhang J."/>
            <person name="Zhang Y."/>
            <person name="Li R."/>
            <person name="Xu Z."/>
            <person name="Li S."/>
            <person name="Li X."/>
            <person name="Zheng H."/>
            <person name="Cong L."/>
            <person name="Lin L."/>
            <person name="Yin J."/>
            <person name="Geng J."/>
            <person name="Li G."/>
            <person name="Shi J."/>
            <person name="Liu J."/>
            <person name="Lv H."/>
            <person name="Li J."/>
            <person name="Wang J."/>
            <person name="Deng Y."/>
            <person name="Ran L."/>
            <person name="Shi X."/>
            <person name="Wang X."/>
            <person name="Wu Q."/>
            <person name="Li C."/>
            <person name="Ren X."/>
            <person name="Wang J."/>
            <person name="Wang X."/>
            <person name="Li D."/>
            <person name="Liu D."/>
            <person name="Zhang X."/>
            <person name="Ji Z."/>
            <person name="Zhao W."/>
            <person name="Sun Y."/>
            <person name="Zhang Z."/>
            <person name="Bao J."/>
            <person name="Han Y."/>
            <person name="Dong L."/>
            <person name="Ji J."/>
            <person name="Chen P."/>
            <person name="Wu S."/>
            <person name="Liu J."/>
            <person name="Xiao Y."/>
            <person name="Bu D."/>
            <person name="Tan J."/>
            <person name="Yang L."/>
            <person name="Ye C."/>
            <person name="Zhang J."/>
            <person name="Xu J."/>
            <person name="Zhou Y."/>
            <person name="Yu Y."/>
            <person name="Zhang B."/>
            <person name="Zhuang S."/>
            <person name="Wei H."/>
            <person name="Liu B."/>
            <person name="Lei M."/>
            <person name="Yu H."/>
            <person name="Li Y."/>
            <person name="Xu H."/>
            <person name="Wei S."/>
            <person name="He X."/>
            <person name="Fang L."/>
            <person name="Zhang Z."/>
            <person name="Zhang Y."/>
            <person name="Huang X."/>
            <person name="Su Z."/>
            <person name="Tong W."/>
            <person name="Li J."/>
            <person name="Tong Z."/>
            <person name="Li S."/>
            <person name="Ye J."/>
            <person name="Wang L."/>
            <person name="Fang L."/>
            <person name="Lei T."/>
            <person name="Chen C.-S."/>
            <person name="Chen H.-C."/>
            <person name="Xu Z."/>
            <person name="Li H."/>
            <person name="Huang H."/>
            <person name="Zhang F."/>
            <person name="Xu H."/>
            <person name="Li N."/>
            <person name="Zhao C."/>
            <person name="Li S."/>
            <person name="Dong L."/>
            <person name="Huang Y."/>
            <person name="Li L."/>
            <person name="Xi Y."/>
            <person name="Qi Q."/>
            <person name="Li W."/>
            <person name="Zhang B."/>
            <person name="Hu W."/>
            <person name="Zhang Y."/>
            <person name="Tian X."/>
            <person name="Jiao Y."/>
            <person name="Liang X."/>
            <person name="Jin J."/>
            <person name="Gao L."/>
            <person name="Zheng W."/>
            <person name="Hao B."/>
            <person name="Liu S.-M."/>
            <person name="Wang W."/>
            <person name="Yuan L."/>
            <person name="Cao M."/>
            <person name="McDermott J."/>
            <person name="Samudrala R."/>
            <person name="Wang J."/>
            <person name="Wong G.K.-S."/>
            <person name="Yang H."/>
        </authorList>
    </citation>
    <scope>NUCLEOTIDE SEQUENCE [LARGE SCALE GENOMIC DNA]</scope>
    <source>
        <strain>cv. Nipponbare</strain>
    </source>
</reference>
<evidence type="ECO:0000250" key="1"/>
<evidence type="ECO:0000255" key="2"/>
<evidence type="ECO:0000256" key="3">
    <source>
        <dbReference type="SAM" id="MobiDB-lite"/>
    </source>
</evidence>
<evidence type="ECO:0000269" key="4">
    <source>
    </source>
</evidence>
<evidence type="ECO:0000305" key="5"/>
<feature type="chain" id="PRO_0000398193" description="Sucrose transport protein SUT4">
    <location>
        <begin position="1"/>
        <end position="595"/>
    </location>
</feature>
<feature type="topological domain" description="Cytoplasmic" evidence="2">
    <location>
        <begin position="1"/>
        <end position="61"/>
    </location>
</feature>
<feature type="transmembrane region" description="Helical" evidence="2">
    <location>
        <begin position="62"/>
        <end position="82"/>
    </location>
</feature>
<feature type="topological domain" description="Extracellular" evidence="2">
    <location>
        <begin position="83"/>
        <end position="97"/>
    </location>
</feature>
<feature type="transmembrane region" description="Helical" evidence="2">
    <location>
        <begin position="98"/>
        <end position="118"/>
    </location>
</feature>
<feature type="topological domain" description="Cytoplasmic" evidence="2">
    <location>
        <begin position="119"/>
        <end position="130"/>
    </location>
</feature>
<feature type="transmembrane region" description="Helical" evidence="2">
    <location>
        <begin position="131"/>
        <end position="151"/>
    </location>
</feature>
<feature type="topological domain" description="Extracellular" evidence="2">
    <location>
        <begin position="152"/>
        <end position="173"/>
    </location>
</feature>
<feature type="transmembrane region" description="Helical" evidence="2">
    <location>
        <begin position="174"/>
        <end position="194"/>
    </location>
</feature>
<feature type="topological domain" description="Cytoplasmic" evidence="2">
    <location>
        <begin position="195"/>
        <end position="213"/>
    </location>
</feature>
<feature type="transmembrane region" description="Helical" evidence="2">
    <location>
        <begin position="214"/>
        <end position="234"/>
    </location>
</feature>
<feature type="topological domain" description="Extracellular" evidence="2">
    <location>
        <begin position="235"/>
        <end position="256"/>
    </location>
</feature>
<feature type="transmembrane region" description="Helical" evidence="2">
    <location>
        <begin position="257"/>
        <end position="277"/>
    </location>
</feature>
<feature type="topological domain" description="Cytoplasmic" evidence="2">
    <location>
        <begin position="278"/>
        <end position="365"/>
    </location>
</feature>
<feature type="transmembrane region" description="Helical" evidence="2">
    <location>
        <begin position="366"/>
        <end position="386"/>
    </location>
</feature>
<feature type="topological domain" description="Extracellular" evidence="2">
    <location>
        <begin position="387"/>
        <end position="417"/>
    </location>
</feature>
<feature type="transmembrane region" description="Helical" evidence="2">
    <location>
        <begin position="418"/>
        <end position="438"/>
    </location>
</feature>
<feature type="topological domain" description="Cytoplasmic" evidence="2">
    <location>
        <begin position="439"/>
        <end position="447"/>
    </location>
</feature>
<feature type="transmembrane region" description="Helical" evidence="2">
    <location>
        <begin position="448"/>
        <end position="468"/>
    </location>
</feature>
<feature type="topological domain" description="Extracellular" evidence="2">
    <location>
        <begin position="469"/>
        <end position="491"/>
    </location>
</feature>
<feature type="transmembrane region" description="Helical" evidence="2">
    <location>
        <begin position="492"/>
        <end position="512"/>
    </location>
</feature>
<feature type="topological domain" description="Cytoplasmic" evidence="2">
    <location>
        <begin position="513"/>
        <end position="525"/>
    </location>
</feature>
<feature type="transmembrane region" description="Helical" evidence="2">
    <location>
        <begin position="526"/>
        <end position="546"/>
    </location>
</feature>
<feature type="topological domain" description="Extracellular" evidence="2">
    <location>
        <begin position="547"/>
        <end position="556"/>
    </location>
</feature>
<feature type="transmembrane region" description="Helical" evidence="2">
    <location>
        <begin position="557"/>
        <end position="577"/>
    </location>
</feature>
<feature type="topological domain" description="Cytoplasmic" evidence="2">
    <location>
        <begin position="578"/>
        <end position="595"/>
    </location>
</feature>
<feature type="region of interest" description="Disordered" evidence="3">
    <location>
        <begin position="29"/>
        <end position="55"/>
    </location>
</feature>
<feature type="region of interest" description="Disordered" evidence="3">
    <location>
        <begin position="291"/>
        <end position="340"/>
    </location>
</feature>
<feature type="compositionally biased region" description="Polar residues" evidence="3">
    <location>
        <begin position="320"/>
        <end position="334"/>
    </location>
</feature>
<feature type="glycosylation site" description="N-linked (GlcNAc...) asparagine" evidence="2">
    <location>
        <position position="403"/>
    </location>
</feature>
<feature type="glycosylation site" description="N-linked (GlcNAc...) asparagine" evidence="2">
    <location>
        <position position="484"/>
    </location>
</feature>
<feature type="sequence conflict" description="In Ref. 1; BAC67164." evidence="5" ref="1">
    <original>N</original>
    <variation>H</variation>
    <location>
        <position position="190"/>
    </location>
</feature>
<feature type="sequence conflict" description="In Ref. 1; BAC67164." evidence="5" ref="1">
    <original>I</original>
    <variation>F</variation>
    <location>
        <position position="430"/>
    </location>
</feature>
<feature type="sequence conflict" description="In Ref. 1; BAC67164." evidence="5" ref="1">
    <original>S</original>
    <variation>G</variation>
    <location>
        <position position="507"/>
    </location>
</feature>
<feature type="sequence conflict" description="In Ref. 1; BAC67164." evidence="5" ref="1">
    <original>G</original>
    <variation>S</variation>
    <location>
        <position position="522"/>
    </location>
</feature>
<keyword id="KW-1003">Cell membrane</keyword>
<keyword id="KW-0325">Glycoprotein</keyword>
<keyword id="KW-0472">Membrane</keyword>
<keyword id="KW-1185">Reference proteome</keyword>
<keyword id="KW-0762">Sugar transport</keyword>
<keyword id="KW-0769">Symport</keyword>
<keyword id="KW-0812">Transmembrane</keyword>
<keyword id="KW-1133">Transmembrane helix</keyword>
<keyword id="KW-0813">Transport</keyword>
<proteinExistence type="evidence at transcript level"/>
<gene>
    <name type="primary">SUT4</name>
    <name type="synonym">SUT2</name>
    <name type="ordered locus">Os02g0827200</name>
    <name type="ordered locus">LOC_Os02g58080</name>
    <name type="ORF">OsJ_08963</name>
</gene>
<dbReference type="EMBL" id="AB091673">
    <property type="protein sequence ID" value="BAC67164.1"/>
    <property type="molecule type" value="mRNA"/>
</dbReference>
<dbReference type="EMBL" id="AY137242">
    <property type="protein sequence ID" value="AAN15219.1"/>
    <property type="molecule type" value="mRNA"/>
</dbReference>
<dbReference type="EMBL" id="AP008208">
    <property type="protein sequence ID" value="BAF10505.1"/>
    <property type="molecule type" value="Genomic_DNA"/>
</dbReference>
<dbReference type="EMBL" id="AP014958">
    <property type="status" value="NOT_ANNOTATED_CDS"/>
    <property type="molecule type" value="Genomic_DNA"/>
</dbReference>
<dbReference type="EMBL" id="CM000139">
    <property type="protein sequence ID" value="EEE58094.1"/>
    <property type="molecule type" value="Genomic_DNA"/>
</dbReference>
<dbReference type="RefSeq" id="XP_015625556.1">
    <property type="nucleotide sequence ID" value="XM_015770070.1"/>
</dbReference>
<dbReference type="SMR" id="Q6YK44"/>
<dbReference type="FunCoup" id="Q6YK44">
    <property type="interactions" value="2193"/>
</dbReference>
<dbReference type="STRING" id="39947.Q6YK44"/>
<dbReference type="GlyCosmos" id="Q6YK44">
    <property type="glycosylation" value="2 sites, No reported glycans"/>
</dbReference>
<dbReference type="PaxDb" id="39947-Q6YK44"/>
<dbReference type="KEGG" id="dosa:Os02g0827200"/>
<dbReference type="eggNOG" id="KOG0637">
    <property type="taxonomic scope" value="Eukaryota"/>
</dbReference>
<dbReference type="HOGENOM" id="CLU_065261_0_0_1"/>
<dbReference type="InParanoid" id="Q6YK44"/>
<dbReference type="OrthoDB" id="28755at2759"/>
<dbReference type="UniPathway" id="UPA00238"/>
<dbReference type="Proteomes" id="UP000000763">
    <property type="component" value="Chromosome 2"/>
</dbReference>
<dbReference type="Proteomes" id="UP000007752">
    <property type="component" value="Chromosome 2"/>
</dbReference>
<dbReference type="Proteomes" id="UP000059680">
    <property type="component" value="Chromosome 2"/>
</dbReference>
<dbReference type="GO" id="GO:0016020">
    <property type="term" value="C:membrane"/>
    <property type="evidence" value="ECO:0000318"/>
    <property type="project" value="GO_Central"/>
</dbReference>
<dbReference type="GO" id="GO:0005886">
    <property type="term" value="C:plasma membrane"/>
    <property type="evidence" value="ECO:0007669"/>
    <property type="project" value="UniProtKB-SubCell"/>
</dbReference>
<dbReference type="GO" id="GO:0008506">
    <property type="term" value="F:sucrose:proton symporter activity"/>
    <property type="evidence" value="ECO:0000318"/>
    <property type="project" value="GO_Central"/>
</dbReference>
<dbReference type="GO" id="GO:0005985">
    <property type="term" value="P:sucrose metabolic process"/>
    <property type="evidence" value="ECO:0007669"/>
    <property type="project" value="UniProtKB-UniPathway"/>
</dbReference>
<dbReference type="CDD" id="cd17313">
    <property type="entry name" value="MFS_SLC45_SUC"/>
    <property type="match status" value="1"/>
</dbReference>
<dbReference type="FunFam" id="1.20.1250.20:FF:000366">
    <property type="entry name" value="Sucrose transport protein SUT5"/>
    <property type="match status" value="1"/>
</dbReference>
<dbReference type="FunFam" id="1.20.1250.20:FF:000182">
    <property type="entry name" value="Sucrose transporter SUC2"/>
    <property type="match status" value="1"/>
</dbReference>
<dbReference type="Gene3D" id="1.20.1250.20">
    <property type="entry name" value="MFS general substrate transporter like domains"/>
    <property type="match status" value="1"/>
</dbReference>
<dbReference type="InterPro" id="IPR036259">
    <property type="entry name" value="MFS_trans_sf"/>
</dbReference>
<dbReference type="PANTHER" id="PTHR19432:SF35">
    <property type="entry name" value="SOLUTE CARRIER FAMILY 45 MEMBER 3 ISOFORM X1"/>
    <property type="match status" value="1"/>
</dbReference>
<dbReference type="PANTHER" id="PTHR19432">
    <property type="entry name" value="SUGAR TRANSPORTER"/>
    <property type="match status" value="1"/>
</dbReference>
<dbReference type="Pfam" id="PF13347">
    <property type="entry name" value="MFS_2"/>
    <property type="match status" value="1"/>
</dbReference>
<dbReference type="SUPFAM" id="SSF103473">
    <property type="entry name" value="MFS general substrate transporter"/>
    <property type="match status" value="1"/>
</dbReference>
<protein>
    <recommendedName>
        <fullName>Sucrose transport protein SUT4</fullName>
    </recommendedName>
    <alternativeName>
        <fullName>Sucrose permease 4</fullName>
    </alternativeName>
    <alternativeName>
        <fullName>Sucrose transporter 4</fullName>
        <shortName>OsSUT4</shortName>
    </alternativeName>
    <alternativeName>
        <fullName>Sucrose-proton symporter 4</fullName>
    </alternativeName>
</protein>
<accession>Q6YK44</accession>
<accession>Q84KR4</accession>